<reference key="1">
    <citation type="journal article" date="2005" name="Nucleic Acids Res.">
        <title>Genome dynamics and diversity of Shigella species, the etiologic agents of bacillary dysentery.</title>
        <authorList>
            <person name="Yang F."/>
            <person name="Yang J."/>
            <person name="Zhang X."/>
            <person name="Chen L."/>
            <person name="Jiang Y."/>
            <person name="Yan Y."/>
            <person name="Tang X."/>
            <person name="Wang J."/>
            <person name="Xiong Z."/>
            <person name="Dong J."/>
            <person name="Xue Y."/>
            <person name="Zhu Y."/>
            <person name="Xu X."/>
            <person name="Sun L."/>
            <person name="Chen S."/>
            <person name="Nie H."/>
            <person name="Peng J."/>
            <person name="Xu J."/>
            <person name="Wang Y."/>
            <person name="Yuan Z."/>
            <person name="Wen Y."/>
            <person name="Yao Z."/>
            <person name="Shen Y."/>
            <person name="Qiang B."/>
            <person name="Hou Y."/>
            <person name="Yu J."/>
            <person name="Jin Q."/>
        </authorList>
    </citation>
    <scope>NUCLEOTIDE SEQUENCE [LARGE SCALE GENOMIC DNA]</scope>
    <source>
        <strain>Sd197</strain>
    </source>
</reference>
<gene>
    <name evidence="1" type="primary">metK</name>
    <name type="ordered locus">SDY_3130</name>
</gene>
<accession>Q32C11</accession>
<sequence>MAKHLFTSESVSEGHPDKIADQISDAVLDAILEQDPKARVACETYVKTGMVLVGGEITTSAWVDIEEITRNTVREIGYVHSDMGFDANSCAVLSAIGKQSPDINQGVDRADPLEQGAGDQGLMFGYATNETDVLMPAPITYAHRLVQRQAEVRKNGTLPWLRPDAKSQVTFQYDDGKIVGIDAVVLSTQHSEEIDQKSLQEAVMEEIIKPILPAEWLTSATKFFINPTGRFVIGGPMGDCGLTGRKIIVDTYGGMARHGGGAFSGKDPSKVDRSAAYAARYVAKNIVAAGLADRCEIQVSYAIGVAEPTSIMVETFGTEKVPSEQLTLLVREFFDLRPYGLIQMLDLLHPIYKETAAYGHFGREHFPWEKTDKAQLLRDAAGLK</sequence>
<dbReference type="EC" id="2.5.1.6" evidence="1"/>
<dbReference type="EMBL" id="CP000034">
    <property type="protein sequence ID" value="ABB63144.1"/>
    <property type="molecule type" value="Genomic_DNA"/>
</dbReference>
<dbReference type="RefSeq" id="WP_001062128.1">
    <property type="nucleotide sequence ID" value="NC_007606.1"/>
</dbReference>
<dbReference type="RefSeq" id="YP_404635.1">
    <property type="nucleotide sequence ID" value="NC_007606.1"/>
</dbReference>
<dbReference type="SMR" id="Q32C11"/>
<dbReference type="STRING" id="300267.SDY_3130"/>
<dbReference type="EnsemblBacteria" id="ABB63144">
    <property type="protein sequence ID" value="ABB63144"/>
    <property type="gene ID" value="SDY_3130"/>
</dbReference>
<dbReference type="GeneID" id="93779055"/>
<dbReference type="KEGG" id="sdy:SDY_3130"/>
<dbReference type="PATRIC" id="fig|300267.13.peg.3740"/>
<dbReference type="HOGENOM" id="CLU_041802_1_1_6"/>
<dbReference type="UniPathway" id="UPA00315">
    <property type="reaction ID" value="UER00080"/>
</dbReference>
<dbReference type="Proteomes" id="UP000002716">
    <property type="component" value="Chromosome"/>
</dbReference>
<dbReference type="GO" id="GO:0005737">
    <property type="term" value="C:cytoplasm"/>
    <property type="evidence" value="ECO:0007669"/>
    <property type="project" value="UniProtKB-SubCell"/>
</dbReference>
<dbReference type="GO" id="GO:0005524">
    <property type="term" value="F:ATP binding"/>
    <property type="evidence" value="ECO:0007669"/>
    <property type="project" value="UniProtKB-UniRule"/>
</dbReference>
<dbReference type="GO" id="GO:0000287">
    <property type="term" value="F:magnesium ion binding"/>
    <property type="evidence" value="ECO:0007669"/>
    <property type="project" value="UniProtKB-UniRule"/>
</dbReference>
<dbReference type="GO" id="GO:0004478">
    <property type="term" value="F:methionine adenosyltransferase activity"/>
    <property type="evidence" value="ECO:0007669"/>
    <property type="project" value="UniProtKB-UniRule"/>
</dbReference>
<dbReference type="GO" id="GO:0006730">
    <property type="term" value="P:one-carbon metabolic process"/>
    <property type="evidence" value="ECO:0007669"/>
    <property type="project" value="UniProtKB-KW"/>
</dbReference>
<dbReference type="GO" id="GO:0006556">
    <property type="term" value="P:S-adenosylmethionine biosynthetic process"/>
    <property type="evidence" value="ECO:0007669"/>
    <property type="project" value="UniProtKB-UniRule"/>
</dbReference>
<dbReference type="CDD" id="cd18079">
    <property type="entry name" value="S-AdoMet_synt"/>
    <property type="match status" value="1"/>
</dbReference>
<dbReference type="FunFam" id="3.30.300.10:FF:000001">
    <property type="entry name" value="S-adenosylmethionine synthase"/>
    <property type="match status" value="1"/>
</dbReference>
<dbReference type="FunFam" id="3.30.300.10:FF:000003">
    <property type="entry name" value="S-adenosylmethionine synthase"/>
    <property type="match status" value="1"/>
</dbReference>
<dbReference type="Gene3D" id="3.30.300.10">
    <property type="match status" value="3"/>
</dbReference>
<dbReference type="HAMAP" id="MF_00086">
    <property type="entry name" value="S_AdoMet_synth1"/>
    <property type="match status" value="1"/>
</dbReference>
<dbReference type="InterPro" id="IPR022631">
    <property type="entry name" value="ADOMET_SYNTHASE_CS"/>
</dbReference>
<dbReference type="InterPro" id="IPR022630">
    <property type="entry name" value="S-AdoMet_synt_C"/>
</dbReference>
<dbReference type="InterPro" id="IPR022629">
    <property type="entry name" value="S-AdoMet_synt_central"/>
</dbReference>
<dbReference type="InterPro" id="IPR022628">
    <property type="entry name" value="S-AdoMet_synt_N"/>
</dbReference>
<dbReference type="InterPro" id="IPR002133">
    <property type="entry name" value="S-AdoMet_synthetase"/>
</dbReference>
<dbReference type="InterPro" id="IPR022636">
    <property type="entry name" value="S-AdoMet_synthetase_sfam"/>
</dbReference>
<dbReference type="NCBIfam" id="TIGR01034">
    <property type="entry name" value="metK"/>
    <property type="match status" value="1"/>
</dbReference>
<dbReference type="PANTHER" id="PTHR11964">
    <property type="entry name" value="S-ADENOSYLMETHIONINE SYNTHETASE"/>
    <property type="match status" value="1"/>
</dbReference>
<dbReference type="Pfam" id="PF02773">
    <property type="entry name" value="S-AdoMet_synt_C"/>
    <property type="match status" value="1"/>
</dbReference>
<dbReference type="Pfam" id="PF02772">
    <property type="entry name" value="S-AdoMet_synt_M"/>
    <property type="match status" value="1"/>
</dbReference>
<dbReference type="Pfam" id="PF00438">
    <property type="entry name" value="S-AdoMet_synt_N"/>
    <property type="match status" value="1"/>
</dbReference>
<dbReference type="PIRSF" id="PIRSF000497">
    <property type="entry name" value="MAT"/>
    <property type="match status" value="1"/>
</dbReference>
<dbReference type="SUPFAM" id="SSF55973">
    <property type="entry name" value="S-adenosylmethionine synthetase"/>
    <property type="match status" value="3"/>
</dbReference>
<dbReference type="PROSITE" id="PS00376">
    <property type="entry name" value="ADOMET_SYNTHASE_1"/>
    <property type="match status" value="1"/>
</dbReference>
<dbReference type="PROSITE" id="PS00377">
    <property type="entry name" value="ADOMET_SYNTHASE_2"/>
    <property type="match status" value="1"/>
</dbReference>
<evidence type="ECO:0000255" key="1">
    <source>
        <dbReference type="HAMAP-Rule" id="MF_00086"/>
    </source>
</evidence>
<name>METK_SHIDS</name>
<comment type="function">
    <text evidence="1">Catalyzes the formation of S-adenosylmethionine (AdoMet) from methionine and ATP. The overall synthetic reaction is composed of two sequential steps, AdoMet formation and the subsequent tripolyphosphate hydrolysis which occurs prior to release of AdoMet from the enzyme.</text>
</comment>
<comment type="catalytic activity">
    <reaction evidence="1">
        <text>L-methionine + ATP + H2O = S-adenosyl-L-methionine + phosphate + diphosphate</text>
        <dbReference type="Rhea" id="RHEA:21080"/>
        <dbReference type="ChEBI" id="CHEBI:15377"/>
        <dbReference type="ChEBI" id="CHEBI:30616"/>
        <dbReference type="ChEBI" id="CHEBI:33019"/>
        <dbReference type="ChEBI" id="CHEBI:43474"/>
        <dbReference type="ChEBI" id="CHEBI:57844"/>
        <dbReference type="ChEBI" id="CHEBI:59789"/>
        <dbReference type="EC" id="2.5.1.6"/>
    </reaction>
</comment>
<comment type="cofactor">
    <cofactor evidence="1">
        <name>Mg(2+)</name>
        <dbReference type="ChEBI" id="CHEBI:18420"/>
    </cofactor>
    <text evidence="1">Binds 2 divalent ions per subunit.</text>
</comment>
<comment type="cofactor">
    <cofactor evidence="1">
        <name>K(+)</name>
        <dbReference type="ChEBI" id="CHEBI:29103"/>
    </cofactor>
    <text evidence="1">Binds 1 potassium ion per subunit.</text>
</comment>
<comment type="pathway">
    <text evidence="1">Amino-acid biosynthesis; S-adenosyl-L-methionine biosynthesis; S-adenosyl-L-methionine from L-methionine: step 1/1.</text>
</comment>
<comment type="subunit">
    <text evidence="1">Homotetramer; dimer of dimers.</text>
</comment>
<comment type="subcellular location">
    <subcellularLocation>
        <location evidence="1">Cytoplasm</location>
    </subcellularLocation>
</comment>
<comment type="similarity">
    <text evidence="1">Belongs to the AdoMet synthase family.</text>
</comment>
<proteinExistence type="inferred from homology"/>
<feature type="chain" id="PRO_0000241036" description="S-adenosylmethionine synthase">
    <location>
        <begin position="1"/>
        <end position="384"/>
    </location>
</feature>
<feature type="region of interest" description="Flexible loop" evidence="1">
    <location>
        <begin position="99"/>
        <end position="109"/>
    </location>
</feature>
<feature type="binding site" description="in other chain" evidence="1">
    <location>
        <position position="15"/>
    </location>
    <ligand>
        <name>ATP</name>
        <dbReference type="ChEBI" id="CHEBI:30616"/>
        <note>ligand shared between two neighboring subunits</note>
    </ligand>
</feature>
<feature type="binding site" evidence="1">
    <location>
        <position position="17"/>
    </location>
    <ligand>
        <name>Mg(2+)</name>
        <dbReference type="ChEBI" id="CHEBI:18420"/>
    </ligand>
</feature>
<feature type="binding site" evidence="1">
    <location>
        <position position="43"/>
    </location>
    <ligand>
        <name>K(+)</name>
        <dbReference type="ChEBI" id="CHEBI:29103"/>
    </ligand>
</feature>
<feature type="binding site" description="in other chain" evidence="1">
    <location>
        <position position="56"/>
    </location>
    <ligand>
        <name>L-methionine</name>
        <dbReference type="ChEBI" id="CHEBI:57844"/>
        <note>ligand shared between two neighboring subunits</note>
    </ligand>
</feature>
<feature type="binding site" description="in other chain" evidence="1">
    <location>
        <position position="99"/>
    </location>
    <ligand>
        <name>L-methionine</name>
        <dbReference type="ChEBI" id="CHEBI:57844"/>
        <note>ligand shared between two neighboring subunits</note>
    </ligand>
</feature>
<feature type="binding site" description="in other chain" evidence="1">
    <location>
        <begin position="164"/>
        <end position="166"/>
    </location>
    <ligand>
        <name>ATP</name>
        <dbReference type="ChEBI" id="CHEBI:30616"/>
        <note>ligand shared between two neighboring subunits</note>
    </ligand>
</feature>
<feature type="binding site" description="in other chain" evidence="1">
    <location>
        <begin position="230"/>
        <end position="231"/>
    </location>
    <ligand>
        <name>ATP</name>
        <dbReference type="ChEBI" id="CHEBI:30616"/>
        <note>ligand shared between two neighboring subunits</note>
    </ligand>
</feature>
<feature type="binding site" evidence="1">
    <location>
        <position position="239"/>
    </location>
    <ligand>
        <name>ATP</name>
        <dbReference type="ChEBI" id="CHEBI:30616"/>
        <note>ligand shared between two neighboring subunits</note>
    </ligand>
</feature>
<feature type="binding site" evidence="1">
    <location>
        <position position="239"/>
    </location>
    <ligand>
        <name>L-methionine</name>
        <dbReference type="ChEBI" id="CHEBI:57844"/>
        <note>ligand shared between two neighboring subunits</note>
    </ligand>
</feature>
<feature type="binding site" description="in other chain" evidence="1">
    <location>
        <begin position="245"/>
        <end position="246"/>
    </location>
    <ligand>
        <name>ATP</name>
        <dbReference type="ChEBI" id="CHEBI:30616"/>
        <note>ligand shared between two neighboring subunits</note>
    </ligand>
</feature>
<feature type="binding site" evidence="1">
    <location>
        <position position="262"/>
    </location>
    <ligand>
        <name>ATP</name>
        <dbReference type="ChEBI" id="CHEBI:30616"/>
        <note>ligand shared between two neighboring subunits</note>
    </ligand>
</feature>
<feature type="binding site" evidence="1">
    <location>
        <position position="266"/>
    </location>
    <ligand>
        <name>ATP</name>
        <dbReference type="ChEBI" id="CHEBI:30616"/>
        <note>ligand shared between two neighboring subunits</note>
    </ligand>
</feature>
<feature type="binding site" description="in other chain" evidence="1">
    <location>
        <position position="270"/>
    </location>
    <ligand>
        <name>L-methionine</name>
        <dbReference type="ChEBI" id="CHEBI:57844"/>
        <note>ligand shared between two neighboring subunits</note>
    </ligand>
</feature>
<protein>
    <recommendedName>
        <fullName evidence="1">S-adenosylmethionine synthase</fullName>
        <shortName evidence="1">AdoMet synthase</shortName>
        <ecNumber evidence="1">2.5.1.6</ecNumber>
    </recommendedName>
    <alternativeName>
        <fullName evidence="1">MAT</fullName>
    </alternativeName>
    <alternativeName>
        <fullName evidence="1">Methionine adenosyltransferase</fullName>
    </alternativeName>
</protein>
<organism>
    <name type="scientific">Shigella dysenteriae serotype 1 (strain Sd197)</name>
    <dbReference type="NCBI Taxonomy" id="300267"/>
    <lineage>
        <taxon>Bacteria</taxon>
        <taxon>Pseudomonadati</taxon>
        <taxon>Pseudomonadota</taxon>
        <taxon>Gammaproteobacteria</taxon>
        <taxon>Enterobacterales</taxon>
        <taxon>Enterobacteriaceae</taxon>
        <taxon>Shigella</taxon>
    </lineage>
</organism>
<keyword id="KW-0067">ATP-binding</keyword>
<keyword id="KW-0963">Cytoplasm</keyword>
<keyword id="KW-0460">Magnesium</keyword>
<keyword id="KW-0479">Metal-binding</keyword>
<keyword id="KW-0547">Nucleotide-binding</keyword>
<keyword id="KW-0554">One-carbon metabolism</keyword>
<keyword id="KW-0630">Potassium</keyword>
<keyword id="KW-1185">Reference proteome</keyword>
<keyword id="KW-0808">Transferase</keyword>